<dbReference type="EC" id="1.-.-.-" evidence="2"/>
<dbReference type="EMBL" id="LC027936">
    <property type="protein sequence ID" value="BAU61562.1"/>
    <property type="molecule type" value="Genomic_DNA"/>
</dbReference>
<dbReference type="SMR" id="A0A140JWT5"/>
<dbReference type="GO" id="GO:0005634">
    <property type="term" value="C:nucleus"/>
    <property type="evidence" value="ECO:0007669"/>
    <property type="project" value="TreeGrafter"/>
</dbReference>
<dbReference type="GO" id="GO:0016491">
    <property type="term" value="F:oxidoreductase activity"/>
    <property type="evidence" value="ECO:0007669"/>
    <property type="project" value="UniProtKB-KW"/>
</dbReference>
<dbReference type="CDD" id="cd05251">
    <property type="entry name" value="NmrA_like_SDR_a"/>
    <property type="match status" value="1"/>
</dbReference>
<dbReference type="Gene3D" id="3.40.50.720">
    <property type="entry name" value="NAD(P)-binding Rossmann-like Domain"/>
    <property type="match status" value="1"/>
</dbReference>
<dbReference type="Gene3D" id="3.90.25.10">
    <property type="entry name" value="UDP-galactose 4-epimerase, domain 1"/>
    <property type="match status" value="1"/>
</dbReference>
<dbReference type="InterPro" id="IPR036291">
    <property type="entry name" value="NAD(P)-bd_dom_sf"/>
</dbReference>
<dbReference type="InterPro" id="IPR008030">
    <property type="entry name" value="NmrA-like"/>
</dbReference>
<dbReference type="InterPro" id="IPR051164">
    <property type="entry name" value="NmrA-like_oxidored"/>
</dbReference>
<dbReference type="PANTHER" id="PTHR42748">
    <property type="entry name" value="NITROGEN METABOLITE REPRESSION PROTEIN NMRA FAMILY MEMBER"/>
    <property type="match status" value="1"/>
</dbReference>
<dbReference type="PANTHER" id="PTHR42748:SF30">
    <property type="entry name" value="NMRA-LIKE DOMAIN-CONTAINING PROTEIN"/>
    <property type="match status" value="1"/>
</dbReference>
<dbReference type="Pfam" id="PF05368">
    <property type="entry name" value="NmrA"/>
    <property type="match status" value="1"/>
</dbReference>
<dbReference type="SUPFAM" id="SSF51735">
    <property type="entry name" value="NAD(P)-binding Rossmann-fold domains"/>
    <property type="match status" value="1"/>
</dbReference>
<sequence>MTQTRKLVTVYGATGNQGRSVVKSLLRAPDSFEVRAITRDPNSVAAQELSILGANLVQADGSQSNQMTEAFQGSWAVFLNINSDDPVFWDPKGPTEFDYGKRIIDSAIVAGVKTLVYSTGAACTELTKGTVSLRHLDTKNQIEMYARSTGAFENLVPIIPGYFLENFLFKQGAFIMGGFPWETDAEGYLTWKVPYWGGEEQIPFLSVADDFGDIVHGILISPSEYHLQVVQAMSEITDYQKMTEAFAKVTGKKTRFQPVLPTWKAFDASGNQGFEDVKSMFGFTQETQGHYFGREATDDQVSKNLKASAVLDYKESQQSPSLKTVRAWFAREFAA</sequence>
<proteinExistence type="inferred from homology"/>
<reference key="1">
    <citation type="journal article" date="2015" name="Angew. Chem. Int. Ed.">
        <title>Reconstitution of biosynthetic machinery for the synthesis of the highly elaborated indole diterpene penitrem.</title>
        <authorList>
            <person name="Liu C."/>
            <person name="Tagami K."/>
            <person name="Minami A."/>
            <person name="Matsumoto T."/>
            <person name="Frisvad J.C."/>
            <person name="Suzuki H."/>
            <person name="Ishikawa J."/>
            <person name="Gomi K."/>
            <person name="Oikawa H."/>
        </authorList>
    </citation>
    <scope>NUCLEOTIDE SEQUENCE [GENOMIC DNA]</scope>
    <scope>IDENTIFICATION</scope>
    <scope>FUNCTION</scope>
    <scope>PATHWAY</scope>
    <source>
        <strain>ATCC 90288 / AK-40</strain>
    </source>
</reference>
<comment type="function">
    <text evidence="2">NmrA-like family domain-containing oxidoreductase; part of the gene cluster that mediates the biosynthesis of the indole diterpenes penitrems (PubMed:25831977). The geranylgeranyl diphosphate (GGPP) synthase ptmG catalyzes the first step in penitrem biosynthesis via conversion of farnesyl pyrophosphate and isopentyl pyrophosphate into geranylgeranyl pyrophosphate (GGPP) (PubMed:25831977). Condensation of indole-3-glycerol phosphate with GGPP by the prenyl transferase ptmC then forms 3-geranylgeranylindole (3-GGI) (PubMed:25831977). Epoxidation by the FAD-dependent monooxygenase ptmM leads to a epoxidized-GGI that is substrate of the terpene cyclase ptmB for cyclization to yield paspaline (PubMed:25831977). Paspaline is subsequently converted to 13-desoxypaxilline by the cytochrome P450 monooxygenase ptmP, the latter being then converted to paxilline by the cytochrome P450 monooxygenase ptmQ (PubMed:25831977). Paxilline is converted to beta-paxitriol via C-10 ketoreduction by the short-chain dehydrogenase ptmH which can be monoprenylated at the C-20 by the indole diterpene prenyltransferase ptmD (PubMed:25831977). A two-step elimination (acetylation and elimination) process performed by the O-acetyltransferase ptmV and ptmI leads to the production of the prenylated form of penijanthine (PubMed:25831977). The FAD-linked oxidoreductase ptmO then converts the prenylated form of penijanthine into PC-M5 which is in turn transformed into PC-M4 by the aromatic dimethylallyltransferase ptmE (PubMed:25831977). Five sequential oxidative transformations performed by the cytochrome P450 monooxygenases ptmK, ptmU, ptmL, ptmN and ptmJ yield the various penitrem compounds. PtmK, ptmU and ptmM are involved in the formation of the key bicyclic ring of penitrem C via the formation of the intermediates secopenitrem D and penitrem D. PtmL catalyzes the epoxidation of penitrem D and C to yield penitrem B and F, respectively. PtmJ catalyzes the last benzylic hydroxylation to convert penitrem B to prenitrem E and penitrem F to penitrem A (PubMed:25831977).</text>
</comment>
<comment type="pathway">
    <text evidence="5">Secondary metabolite biosynthesis.</text>
</comment>
<comment type="similarity">
    <text evidence="4">Belongs to the NmrA-type oxidoreductase family.</text>
</comment>
<name>PTMS_PENOH</name>
<gene>
    <name evidence="3" type="primary">ptmS</name>
</gene>
<protein>
    <recommendedName>
        <fullName evidence="3">NmrA-like family domain-containing oxidoreductase ptmS</fullName>
        <ecNumber evidence="2">1.-.-.-</ecNumber>
    </recommendedName>
    <alternativeName>
        <fullName evidence="3">Penitrem biosynthesis cluster 1 protein S</fullName>
    </alternativeName>
</protein>
<evidence type="ECO:0000250" key="1">
    <source>
        <dbReference type="UniProtKB" id="Q9HBL8"/>
    </source>
</evidence>
<evidence type="ECO:0000269" key="2">
    <source>
    </source>
</evidence>
<evidence type="ECO:0000303" key="3">
    <source>
    </source>
</evidence>
<evidence type="ECO:0000305" key="4"/>
<evidence type="ECO:0000305" key="5">
    <source>
    </source>
</evidence>
<accession>A0A140JWT5</accession>
<feature type="chain" id="PRO_0000446597" description="NmrA-like family domain-containing oxidoreductase ptmS">
    <location>
        <begin position="1"/>
        <end position="335"/>
    </location>
</feature>
<feature type="region of interest" description="Interaction with ASS1" evidence="1">
    <location>
        <begin position="161"/>
        <end position="206"/>
    </location>
</feature>
<feature type="binding site" evidence="1">
    <location>
        <begin position="12"/>
        <end position="17"/>
    </location>
    <ligand>
        <name>NADP(+)</name>
        <dbReference type="ChEBI" id="CHEBI:58349"/>
    </ligand>
</feature>
<feature type="binding site" evidence="1">
    <location>
        <begin position="39"/>
        <end position="43"/>
    </location>
    <ligand>
        <name>NADP(+)</name>
        <dbReference type="ChEBI" id="CHEBI:58349"/>
    </ligand>
</feature>
<feature type="binding site" evidence="1">
    <location>
        <begin position="60"/>
        <end position="61"/>
    </location>
    <ligand>
        <name>NADP(+)</name>
        <dbReference type="ChEBI" id="CHEBI:58349"/>
    </ligand>
</feature>
<feature type="binding site" evidence="1">
    <location>
        <begin position="81"/>
        <end position="88"/>
    </location>
    <ligand>
        <name>NADP(+)</name>
        <dbReference type="ChEBI" id="CHEBI:58349"/>
    </ligand>
</feature>
<feature type="binding site" evidence="1">
    <location>
        <position position="139"/>
    </location>
    <ligand>
        <name>NADP(+)</name>
        <dbReference type="ChEBI" id="CHEBI:58349"/>
    </ligand>
</feature>
<feature type="binding site" evidence="1">
    <location>
        <begin position="163"/>
        <end position="166"/>
    </location>
    <ligand>
        <name>NADP(+)</name>
        <dbReference type="ChEBI" id="CHEBI:58349"/>
    </ligand>
</feature>
<keyword id="KW-0521">NADP</keyword>
<keyword id="KW-0560">Oxidoreductase</keyword>
<organism>
    <name type="scientific">Penicillium ochrochloron</name>
    <dbReference type="NCBI Taxonomy" id="69780"/>
    <lineage>
        <taxon>Eukaryota</taxon>
        <taxon>Fungi</taxon>
        <taxon>Dikarya</taxon>
        <taxon>Ascomycota</taxon>
        <taxon>Pezizomycotina</taxon>
        <taxon>Eurotiomycetes</taxon>
        <taxon>Eurotiomycetidae</taxon>
        <taxon>Eurotiales</taxon>
        <taxon>Aspergillaceae</taxon>
        <taxon>Penicillium</taxon>
    </lineage>
</organism>